<protein>
    <recommendedName>
        <fullName evidence="1">Ribonuclease 3</fullName>
        <ecNumber evidence="1">3.1.26.3</ecNumber>
    </recommendedName>
    <alternativeName>
        <fullName evidence="1">Ribonuclease III</fullName>
        <shortName evidence="1">RNase III</shortName>
    </alternativeName>
</protein>
<name>RNC_ACTPJ</name>
<reference key="1">
    <citation type="journal article" date="2008" name="PLoS ONE">
        <title>Genome biology of Actinobacillus pleuropneumoniae JL03, an isolate of serotype 3 prevalent in China.</title>
        <authorList>
            <person name="Xu Z."/>
            <person name="Zhou Y."/>
            <person name="Li L."/>
            <person name="Zhou R."/>
            <person name="Xiao S."/>
            <person name="Wan Y."/>
            <person name="Zhang S."/>
            <person name="Wang K."/>
            <person name="Li W."/>
            <person name="Li L."/>
            <person name="Jin H."/>
            <person name="Kang M."/>
            <person name="Dalai B."/>
            <person name="Li T."/>
            <person name="Liu L."/>
            <person name="Cheng Y."/>
            <person name="Zhang L."/>
            <person name="Xu T."/>
            <person name="Zheng H."/>
            <person name="Pu S."/>
            <person name="Wang B."/>
            <person name="Gu W."/>
            <person name="Zhang X.L."/>
            <person name="Zhu G.-F."/>
            <person name="Wang S."/>
            <person name="Zhao G.-P."/>
            <person name="Chen H."/>
        </authorList>
    </citation>
    <scope>NUCLEOTIDE SEQUENCE [LARGE SCALE GENOMIC DNA]</scope>
    <source>
        <strain>JL03</strain>
    </source>
</reference>
<accession>B0BUA6</accession>
<feature type="chain" id="PRO_1000094094" description="Ribonuclease 3">
    <location>
        <begin position="1"/>
        <end position="223"/>
    </location>
</feature>
<feature type="domain" description="RNase III" evidence="1">
    <location>
        <begin position="3"/>
        <end position="125"/>
    </location>
</feature>
<feature type="domain" description="DRBM" evidence="1">
    <location>
        <begin position="152"/>
        <end position="222"/>
    </location>
</feature>
<feature type="active site" evidence="1">
    <location>
        <position position="42"/>
    </location>
</feature>
<feature type="active site" evidence="1">
    <location>
        <position position="114"/>
    </location>
</feature>
<feature type="binding site" evidence="1">
    <location>
        <position position="38"/>
    </location>
    <ligand>
        <name>Mg(2+)</name>
        <dbReference type="ChEBI" id="CHEBI:18420"/>
    </ligand>
</feature>
<feature type="binding site" evidence="1">
    <location>
        <position position="111"/>
    </location>
    <ligand>
        <name>Mg(2+)</name>
        <dbReference type="ChEBI" id="CHEBI:18420"/>
    </ligand>
</feature>
<feature type="binding site" evidence="1">
    <location>
        <position position="114"/>
    </location>
    <ligand>
        <name>Mg(2+)</name>
        <dbReference type="ChEBI" id="CHEBI:18420"/>
    </ligand>
</feature>
<sequence length="223" mass="25137">MQLERLQKKLGYQFTNLDYLLQALTHRSAGAKNNERLEFLGDSILNFAIGKALFEKFPKANEGELSRMRATLVREQTLAILARKFGLGEYMKLGAGELKSGGYRRESILSDCVEAIIAAIYLDAGMDKAIAQVHLWYQDLLAEMKPGDAQKDPKTRLQEFLQGRKLPLPTYEVLNIKGEAHNQTFKVTCKIEMLEEIFIGIGTSRRKAEQNAAEQVLAKLTTK</sequence>
<proteinExistence type="inferred from homology"/>
<comment type="function">
    <text evidence="1">Digests double-stranded RNA. Involved in the processing of primary rRNA transcript to yield the immediate precursors to the large and small rRNAs (23S and 16S). Processes some mRNAs, and tRNAs when they are encoded in the rRNA operon. Processes pre-crRNA and tracrRNA of type II CRISPR loci if present in the organism.</text>
</comment>
<comment type="catalytic activity">
    <reaction evidence="1">
        <text>Endonucleolytic cleavage to 5'-phosphomonoester.</text>
        <dbReference type="EC" id="3.1.26.3"/>
    </reaction>
</comment>
<comment type="cofactor">
    <cofactor evidence="1">
        <name>Mg(2+)</name>
        <dbReference type="ChEBI" id="CHEBI:18420"/>
    </cofactor>
</comment>
<comment type="subunit">
    <text evidence="1">Homodimer.</text>
</comment>
<comment type="subcellular location">
    <subcellularLocation>
        <location evidence="1">Cytoplasm</location>
    </subcellularLocation>
</comment>
<comment type="similarity">
    <text evidence="1">Belongs to the ribonuclease III family.</text>
</comment>
<gene>
    <name evidence="1" type="primary">rnc</name>
    <name type="ordered locus">APJL_0536</name>
</gene>
<organism>
    <name type="scientific">Actinobacillus pleuropneumoniae serotype 3 (strain JL03)</name>
    <dbReference type="NCBI Taxonomy" id="434271"/>
    <lineage>
        <taxon>Bacteria</taxon>
        <taxon>Pseudomonadati</taxon>
        <taxon>Pseudomonadota</taxon>
        <taxon>Gammaproteobacteria</taxon>
        <taxon>Pasteurellales</taxon>
        <taxon>Pasteurellaceae</taxon>
        <taxon>Actinobacillus</taxon>
    </lineage>
</organism>
<dbReference type="EC" id="3.1.26.3" evidence="1"/>
<dbReference type="EMBL" id="CP000687">
    <property type="protein sequence ID" value="ABY69111.1"/>
    <property type="molecule type" value="Genomic_DNA"/>
</dbReference>
<dbReference type="RefSeq" id="WP_012262845.1">
    <property type="nucleotide sequence ID" value="NC_010278.1"/>
</dbReference>
<dbReference type="SMR" id="B0BUA6"/>
<dbReference type="KEGG" id="apj:APJL_0536"/>
<dbReference type="HOGENOM" id="CLU_000907_1_1_6"/>
<dbReference type="Proteomes" id="UP000008547">
    <property type="component" value="Chromosome"/>
</dbReference>
<dbReference type="GO" id="GO:0005737">
    <property type="term" value="C:cytoplasm"/>
    <property type="evidence" value="ECO:0007669"/>
    <property type="project" value="UniProtKB-SubCell"/>
</dbReference>
<dbReference type="GO" id="GO:0003725">
    <property type="term" value="F:double-stranded RNA binding"/>
    <property type="evidence" value="ECO:0007669"/>
    <property type="project" value="TreeGrafter"/>
</dbReference>
<dbReference type="GO" id="GO:0046872">
    <property type="term" value="F:metal ion binding"/>
    <property type="evidence" value="ECO:0007669"/>
    <property type="project" value="UniProtKB-KW"/>
</dbReference>
<dbReference type="GO" id="GO:0004525">
    <property type="term" value="F:ribonuclease III activity"/>
    <property type="evidence" value="ECO:0007669"/>
    <property type="project" value="UniProtKB-UniRule"/>
</dbReference>
<dbReference type="GO" id="GO:0019843">
    <property type="term" value="F:rRNA binding"/>
    <property type="evidence" value="ECO:0007669"/>
    <property type="project" value="UniProtKB-KW"/>
</dbReference>
<dbReference type="GO" id="GO:0006397">
    <property type="term" value="P:mRNA processing"/>
    <property type="evidence" value="ECO:0007669"/>
    <property type="project" value="UniProtKB-UniRule"/>
</dbReference>
<dbReference type="GO" id="GO:0010468">
    <property type="term" value="P:regulation of gene expression"/>
    <property type="evidence" value="ECO:0007669"/>
    <property type="project" value="TreeGrafter"/>
</dbReference>
<dbReference type="GO" id="GO:0006364">
    <property type="term" value="P:rRNA processing"/>
    <property type="evidence" value="ECO:0007669"/>
    <property type="project" value="UniProtKB-UniRule"/>
</dbReference>
<dbReference type="GO" id="GO:0008033">
    <property type="term" value="P:tRNA processing"/>
    <property type="evidence" value="ECO:0007669"/>
    <property type="project" value="UniProtKB-KW"/>
</dbReference>
<dbReference type="CDD" id="cd10845">
    <property type="entry name" value="DSRM_RNAse_III_family"/>
    <property type="match status" value="1"/>
</dbReference>
<dbReference type="CDD" id="cd00593">
    <property type="entry name" value="RIBOc"/>
    <property type="match status" value="1"/>
</dbReference>
<dbReference type="FunFam" id="1.10.1520.10:FF:000001">
    <property type="entry name" value="Ribonuclease 3"/>
    <property type="match status" value="1"/>
</dbReference>
<dbReference type="FunFam" id="3.30.160.20:FF:000003">
    <property type="entry name" value="Ribonuclease 3"/>
    <property type="match status" value="1"/>
</dbReference>
<dbReference type="Gene3D" id="3.30.160.20">
    <property type="match status" value="1"/>
</dbReference>
<dbReference type="Gene3D" id="1.10.1520.10">
    <property type="entry name" value="Ribonuclease III domain"/>
    <property type="match status" value="1"/>
</dbReference>
<dbReference type="HAMAP" id="MF_00104">
    <property type="entry name" value="RNase_III"/>
    <property type="match status" value="1"/>
</dbReference>
<dbReference type="InterPro" id="IPR014720">
    <property type="entry name" value="dsRBD_dom"/>
</dbReference>
<dbReference type="InterPro" id="IPR011907">
    <property type="entry name" value="RNase_III"/>
</dbReference>
<dbReference type="InterPro" id="IPR000999">
    <property type="entry name" value="RNase_III_dom"/>
</dbReference>
<dbReference type="InterPro" id="IPR036389">
    <property type="entry name" value="RNase_III_sf"/>
</dbReference>
<dbReference type="NCBIfam" id="TIGR02191">
    <property type="entry name" value="RNaseIII"/>
    <property type="match status" value="1"/>
</dbReference>
<dbReference type="PANTHER" id="PTHR11207:SF0">
    <property type="entry name" value="RIBONUCLEASE 3"/>
    <property type="match status" value="1"/>
</dbReference>
<dbReference type="PANTHER" id="PTHR11207">
    <property type="entry name" value="RIBONUCLEASE III"/>
    <property type="match status" value="1"/>
</dbReference>
<dbReference type="Pfam" id="PF00035">
    <property type="entry name" value="dsrm"/>
    <property type="match status" value="1"/>
</dbReference>
<dbReference type="Pfam" id="PF14622">
    <property type="entry name" value="Ribonucleas_3_3"/>
    <property type="match status" value="1"/>
</dbReference>
<dbReference type="SMART" id="SM00358">
    <property type="entry name" value="DSRM"/>
    <property type="match status" value="1"/>
</dbReference>
<dbReference type="SMART" id="SM00535">
    <property type="entry name" value="RIBOc"/>
    <property type="match status" value="1"/>
</dbReference>
<dbReference type="SUPFAM" id="SSF54768">
    <property type="entry name" value="dsRNA-binding domain-like"/>
    <property type="match status" value="1"/>
</dbReference>
<dbReference type="SUPFAM" id="SSF69065">
    <property type="entry name" value="RNase III domain-like"/>
    <property type="match status" value="1"/>
</dbReference>
<dbReference type="PROSITE" id="PS50137">
    <property type="entry name" value="DS_RBD"/>
    <property type="match status" value="1"/>
</dbReference>
<dbReference type="PROSITE" id="PS00517">
    <property type="entry name" value="RNASE_3_1"/>
    <property type="match status" value="1"/>
</dbReference>
<dbReference type="PROSITE" id="PS50142">
    <property type="entry name" value="RNASE_3_2"/>
    <property type="match status" value="1"/>
</dbReference>
<keyword id="KW-0963">Cytoplasm</keyword>
<keyword id="KW-0255">Endonuclease</keyword>
<keyword id="KW-0378">Hydrolase</keyword>
<keyword id="KW-0460">Magnesium</keyword>
<keyword id="KW-0479">Metal-binding</keyword>
<keyword id="KW-0507">mRNA processing</keyword>
<keyword id="KW-0540">Nuclease</keyword>
<keyword id="KW-0694">RNA-binding</keyword>
<keyword id="KW-0698">rRNA processing</keyword>
<keyword id="KW-0699">rRNA-binding</keyword>
<keyword id="KW-0819">tRNA processing</keyword>
<evidence type="ECO:0000255" key="1">
    <source>
        <dbReference type="HAMAP-Rule" id="MF_00104"/>
    </source>
</evidence>